<dbReference type="EMBL" id="AL591688">
    <property type="protein sequence ID" value="CAC45388.1"/>
    <property type="molecule type" value="Genomic_DNA"/>
</dbReference>
<dbReference type="RefSeq" id="NP_384922.1">
    <property type="nucleotide sequence ID" value="NC_003047.1"/>
</dbReference>
<dbReference type="RefSeq" id="WP_010968841.1">
    <property type="nucleotide sequence ID" value="NC_003047.1"/>
</dbReference>
<dbReference type="SMR" id="Q92RP4"/>
<dbReference type="EnsemblBacteria" id="CAC45388">
    <property type="protein sequence ID" value="CAC45388"/>
    <property type="gene ID" value="SMc00932"/>
</dbReference>
<dbReference type="KEGG" id="sme:SMc00932"/>
<dbReference type="PATRIC" id="fig|266834.11.peg.2206"/>
<dbReference type="eggNOG" id="COG0323">
    <property type="taxonomic scope" value="Bacteria"/>
</dbReference>
<dbReference type="HOGENOM" id="CLU_004131_4_2_5"/>
<dbReference type="OrthoDB" id="9763467at2"/>
<dbReference type="Proteomes" id="UP000001976">
    <property type="component" value="Chromosome"/>
</dbReference>
<dbReference type="GO" id="GO:0032300">
    <property type="term" value="C:mismatch repair complex"/>
    <property type="evidence" value="ECO:0007669"/>
    <property type="project" value="InterPro"/>
</dbReference>
<dbReference type="GO" id="GO:0005524">
    <property type="term" value="F:ATP binding"/>
    <property type="evidence" value="ECO:0007669"/>
    <property type="project" value="InterPro"/>
</dbReference>
<dbReference type="GO" id="GO:0016887">
    <property type="term" value="F:ATP hydrolysis activity"/>
    <property type="evidence" value="ECO:0007669"/>
    <property type="project" value="InterPro"/>
</dbReference>
<dbReference type="GO" id="GO:0140664">
    <property type="term" value="F:ATP-dependent DNA damage sensor activity"/>
    <property type="evidence" value="ECO:0007669"/>
    <property type="project" value="InterPro"/>
</dbReference>
<dbReference type="GO" id="GO:0030983">
    <property type="term" value="F:mismatched DNA binding"/>
    <property type="evidence" value="ECO:0007669"/>
    <property type="project" value="InterPro"/>
</dbReference>
<dbReference type="GO" id="GO:0006298">
    <property type="term" value="P:mismatch repair"/>
    <property type="evidence" value="ECO:0007669"/>
    <property type="project" value="UniProtKB-UniRule"/>
</dbReference>
<dbReference type="CDD" id="cd16926">
    <property type="entry name" value="HATPase_MutL-MLH-PMS-like"/>
    <property type="match status" value="1"/>
</dbReference>
<dbReference type="CDD" id="cd00782">
    <property type="entry name" value="MutL_Trans"/>
    <property type="match status" value="1"/>
</dbReference>
<dbReference type="FunFam" id="3.30.565.10:FF:000003">
    <property type="entry name" value="DNA mismatch repair endonuclease MutL"/>
    <property type="match status" value="1"/>
</dbReference>
<dbReference type="Gene3D" id="3.30.230.10">
    <property type="match status" value="1"/>
</dbReference>
<dbReference type="Gene3D" id="3.30.565.10">
    <property type="entry name" value="Histidine kinase-like ATPase, C-terminal domain"/>
    <property type="match status" value="1"/>
</dbReference>
<dbReference type="Gene3D" id="3.30.1540.20">
    <property type="entry name" value="MutL, C-terminal domain, dimerisation subdomain"/>
    <property type="match status" value="1"/>
</dbReference>
<dbReference type="Gene3D" id="3.30.1370.100">
    <property type="entry name" value="MutL, C-terminal domain, regulatory subdomain"/>
    <property type="match status" value="1"/>
</dbReference>
<dbReference type="HAMAP" id="MF_00149">
    <property type="entry name" value="DNA_mis_repair"/>
    <property type="match status" value="1"/>
</dbReference>
<dbReference type="InterPro" id="IPR014762">
    <property type="entry name" value="DNA_mismatch_repair_CS"/>
</dbReference>
<dbReference type="InterPro" id="IPR020667">
    <property type="entry name" value="DNA_mismatch_repair_MutL"/>
</dbReference>
<dbReference type="InterPro" id="IPR013507">
    <property type="entry name" value="DNA_mismatch_S5_2-like"/>
</dbReference>
<dbReference type="InterPro" id="IPR036890">
    <property type="entry name" value="HATPase_C_sf"/>
</dbReference>
<dbReference type="InterPro" id="IPR002099">
    <property type="entry name" value="MutL/Mlh/PMS"/>
</dbReference>
<dbReference type="InterPro" id="IPR038973">
    <property type="entry name" value="MutL/Mlh/Pms-like"/>
</dbReference>
<dbReference type="InterPro" id="IPR014790">
    <property type="entry name" value="MutL_C"/>
</dbReference>
<dbReference type="InterPro" id="IPR042120">
    <property type="entry name" value="MutL_C_dimsub"/>
</dbReference>
<dbReference type="InterPro" id="IPR042121">
    <property type="entry name" value="MutL_C_regsub"/>
</dbReference>
<dbReference type="InterPro" id="IPR037198">
    <property type="entry name" value="MutL_C_sf"/>
</dbReference>
<dbReference type="InterPro" id="IPR020568">
    <property type="entry name" value="Ribosomal_Su5_D2-typ_SF"/>
</dbReference>
<dbReference type="InterPro" id="IPR014721">
    <property type="entry name" value="Ribsml_uS5_D2-typ_fold_subgr"/>
</dbReference>
<dbReference type="NCBIfam" id="TIGR00585">
    <property type="entry name" value="mutl"/>
    <property type="match status" value="1"/>
</dbReference>
<dbReference type="NCBIfam" id="NF000953">
    <property type="entry name" value="PRK00095.2-4"/>
    <property type="match status" value="1"/>
</dbReference>
<dbReference type="PANTHER" id="PTHR10073">
    <property type="entry name" value="DNA MISMATCH REPAIR PROTEIN MLH, PMS, MUTL"/>
    <property type="match status" value="1"/>
</dbReference>
<dbReference type="PANTHER" id="PTHR10073:SF12">
    <property type="entry name" value="DNA MISMATCH REPAIR PROTEIN MLH1"/>
    <property type="match status" value="1"/>
</dbReference>
<dbReference type="Pfam" id="PF01119">
    <property type="entry name" value="DNA_mis_repair"/>
    <property type="match status" value="1"/>
</dbReference>
<dbReference type="Pfam" id="PF13589">
    <property type="entry name" value="HATPase_c_3"/>
    <property type="match status" value="1"/>
</dbReference>
<dbReference type="Pfam" id="PF08676">
    <property type="entry name" value="MutL_C"/>
    <property type="match status" value="1"/>
</dbReference>
<dbReference type="SMART" id="SM01340">
    <property type="entry name" value="DNA_mis_repair"/>
    <property type="match status" value="1"/>
</dbReference>
<dbReference type="SMART" id="SM00853">
    <property type="entry name" value="MutL_C"/>
    <property type="match status" value="1"/>
</dbReference>
<dbReference type="SUPFAM" id="SSF55874">
    <property type="entry name" value="ATPase domain of HSP90 chaperone/DNA topoisomerase II/histidine kinase"/>
    <property type="match status" value="1"/>
</dbReference>
<dbReference type="SUPFAM" id="SSF118116">
    <property type="entry name" value="DNA mismatch repair protein MutL"/>
    <property type="match status" value="1"/>
</dbReference>
<dbReference type="SUPFAM" id="SSF54211">
    <property type="entry name" value="Ribosomal protein S5 domain 2-like"/>
    <property type="match status" value="1"/>
</dbReference>
<dbReference type="PROSITE" id="PS00058">
    <property type="entry name" value="DNA_MISMATCH_REPAIR_1"/>
    <property type="match status" value="1"/>
</dbReference>
<sequence length="605" mass="65105">MAIKQLSETLINQIAAGEVIERPASAAKELIENALDAGATRIEIATAGGGKTLLRVTDNGIGMSPADLELAIRRHCTSKLNDSLADIRTLGFRGEALPSIGSVARLSITTRTAEAREGAAITVTGGRSEPARPSAAIVGTVVEVRDLFFATPARLKFMKSEKAEAAAISEVVRRMAIAFPRVRFVLSGSDRTTLEFPATGDDRLARMAQVLGRDFRDNAIEIDAEREGARLTGFAGVPTFNRGNSLQQYAFVNGRPVQDKLIMSALRAAYAETIPQGRYPIAVLSITLDPALVDVNVHPAKSDVRFRDPGLIRGLIIGAIREALTREGDRAATTGAHGLMRAFRPEFHRAGQQRPQEPWSAAASPHRPLRFEEAARGFAEAPQAAFSDFAQPSARSAAAAVEATRATDGQAASFPLGAARAQLHENYIVAQTDDGLVIVDQHAAHERLVFETMRTALHARPVPAQALLIPEIVGLPEDDCDRLMAHAEEFTRLGLAIERFGPAAVAVRETPAMLGEMDAAGLVRQLADELAEWDTASGLAGRLEYLAATMACHGSVRSGRRLRTEEMNALLRQMEATPGSGQCNHGRPTYIELKLADIERLFGRS</sequence>
<organism>
    <name type="scientific">Rhizobium meliloti (strain 1021)</name>
    <name type="common">Ensifer meliloti</name>
    <name type="synonym">Sinorhizobium meliloti</name>
    <dbReference type="NCBI Taxonomy" id="266834"/>
    <lineage>
        <taxon>Bacteria</taxon>
        <taxon>Pseudomonadati</taxon>
        <taxon>Pseudomonadota</taxon>
        <taxon>Alphaproteobacteria</taxon>
        <taxon>Hyphomicrobiales</taxon>
        <taxon>Rhizobiaceae</taxon>
        <taxon>Sinorhizobium/Ensifer group</taxon>
        <taxon>Sinorhizobium</taxon>
    </lineage>
</organism>
<feature type="chain" id="PRO_0000177963" description="DNA mismatch repair protein MutL">
    <location>
        <begin position="1"/>
        <end position="605"/>
    </location>
</feature>
<gene>
    <name evidence="1" type="primary">mutL</name>
    <name type="ordered locus">R00816</name>
    <name type="ORF">SMc00932</name>
</gene>
<comment type="function">
    <text evidence="1">This protein is involved in the repair of mismatches in DNA. It is required for dam-dependent methyl-directed DNA mismatch repair. May act as a 'molecular matchmaker', a protein that promotes the formation of a stable complex between two or more DNA-binding proteins in an ATP-dependent manner without itself being part of a final effector complex.</text>
</comment>
<comment type="similarity">
    <text evidence="1">Belongs to the DNA mismatch repair MutL/HexB family.</text>
</comment>
<reference key="1">
    <citation type="journal article" date="2001" name="Proc. Natl. Acad. Sci. U.S.A.">
        <title>Analysis of the chromosome sequence of the legume symbiont Sinorhizobium meliloti strain 1021.</title>
        <authorList>
            <person name="Capela D."/>
            <person name="Barloy-Hubler F."/>
            <person name="Gouzy J."/>
            <person name="Bothe G."/>
            <person name="Ampe F."/>
            <person name="Batut J."/>
            <person name="Boistard P."/>
            <person name="Becker A."/>
            <person name="Boutry M."/>
            <person name="Cadieu E."/>
            <person name="Dreano S."/>
            <person name="Gloux S."/>
            <person name="Godrie T."/>
            <person name="Goffeau A."/>
            <person name="Kahn D."/>
            <person name="Kiss E."/>
            <person name="Lelaure V."/>
            <person name="Masuy D."/>
            <person name="Pohl T."/>
            <person name="Portetelle D."/>
            <person name="Puehler A."/>
            <person name="Purnelle B."/>
            <person name="Ramsperger U."/>
            <person name="Renard C."/>
            <person name="Thebault P."/>
            <person name="Vandenbol M."/>
            <person name="Weidner S."/>
            <person name="Galibert F."/>
        </authorList>
    </citation>
    <scope>NUCLEOTIDE SEQUENCE [LARGE SCALE GENOMIC DNA]</scope>
    <source>
        <strain>1021</strain>
    </source>
</reference>
<reference key="2">
    <citation type="journal article" date="2001" name="Science">
        <title>The composite genome of the legume symbiont Sinorhizobium meliloti.</title>
        <authorList>
            <person name="Galibert F."/>
            <person name="Finan T.M."/>
            <person name="Long S.R."/>
            <person name="Puehler A."/>
            <person name="Abola P."/>
            <person name="Ampe F."/>
            <person name="Barloy-Hubler F."/>
            <person name="Barnett M.J."/>
            <person name="Becker A."/>
            <person name="Boistard P."/>
            <person name="Bothe G."/>
            <person name="Boutry M."/>
            <person name="Bowser L."/>
            <person name="Buhrmester J."/>
            <person name="Cadieu E."/>
            <person name="Capela D."/>
            <person name="Chain P."/>
            <person name="Cowie A."/>
            <person name="Davis R.W."/>
            <person name="Dreano S."/>
            <person name="Federspiel N.A."/>
            <person name="Fisher R.F."/>
            <person name="Gloux S."/>
            <person name="Godrie T."/>
            <person name="Goffeau A."/>
            <person name="Golding B."/>
            <person name="Gouzy J."/>
            <person name="Gurjal M."/>
            <person name="Hernandez-Lucas I."/>
            <person name="Hong A."/>
            <person name="Huizar L."/>
            <person name="Hyman R.W."/>
            <person name="Jones T."/>
            <person name="Kahn D."/>
            <person name="Kahn M.L."/>
            <person name="Kalman S."/>
            <person name="Keating D.H."/>
            <person name="Kiss E."/>
            <person name="Komp C."/>
            <person name="Lelaure V."/>
            <person name="Masuy D."/>
            <person name="Palm C."/>
            <person name="Peck M.C."/>
            <person name="Pohl T.M."/>
            <person name="Portetelle D."/>
            <person name="Purnelle B."/>
            <person name="Ramsperger U."/>
            <person name="Surzycki R."/>
            <person name="Thebault P."/>
            <person name="Vandenbol M."/>
            <person name="Vorhoelter F.J."/>
            <person name="Weidner S."/>
            <person name="Wells D.H."/>
            <person name="Wong K."/>
            <person name="Yeh K.-C."/>
            <person name="Batut J."/>
        </authorList>
    </citation>
    <scope>NUCLEOTIDE SEQUENCE [LARGE SCALE GENOMIC DNA]</scope>
    <source>
        <strain>1021</strain>
    </source>
</reference>
<accession>Q92RP4</accession>
<name>MUTL_RHIME</name>
<proteinExistence type="inferred from homology"/>
<keyword id="KW-0227">DNA damage</keyword>
<keyword id="KW-0234">DNA repair</keyword>
<keyword id="KW-1185">Reference proteome</keyword>
<protein>
    <recommendedName>
        <fullName evidence="1">DNA mismatch repair protein MutL</fullName>
    </recommendedName>
</protein>
<evidence type="ECO:0000255" key="1">
    <source>
        <dbReference type="HAMAP-Rule" id="MF_00149"/>
    </source>
</evidence>